<sequence length="235" mass="29314">EKKRPDDNDDNDDEDRPERPERPEEPERPERPERPERPEEPEREEPEREPKCDDEMREKVKRRCDNENRRFDARRCECGEKKRPDDNDDNDDEDRPERPERPERPERPERPERPEEPEREEPEREPKCDEEMREKFKRRCDNENRRFDARRCECGEKKRPDDNDDEDRPERPERPERPERPEEPEREEPEREPKCDDEMREKVKRRCDNENRRFDARRCECGEKKRPDDNDDEDR</sequence>
<keyword id="KW-0677">Repeat</keyword>
<keyword id="KW-0964">Secreted</keyword>
<gene>
    <name type="primary">BR6</name>
</gene>
<reference key="1">
    <citation type="journal article" date="1984" name="Cell">
        <title>Balbiani ring 6 gene in Chironomus tentans: a diverged member of the Balbiani ring gene family.</title>
        <authorList>
            <person name="Lendahl U."/>
            <person name="Wieslander L."/>
        </authorList>
    </citation>
    <scope>NUCLEOTIDE SEQUENCE [MRNA]</scope>
    <source>
        <tissue>Salivary gland</tissue>
    </source>
</reference>
<dbReference type="EMBL" id="L29169">
    <property type="protein sequence ID" value="AAA28245.1"/>
    <property type="molecule type" value="mRNA"/>
</dbReference>
<dbReference type="PIR" id="A43732">
    <property type="entry name" value="A43732"/>
</dbReference>
<dbReference type="GO" id="GO:0005576">
    <property type="term" value="C:extracellular region"/>
    <property type="evidence" value="ECO:0007669"/>
    <property type="project" value="UniProtKB-SubCell"/>
</dbReference>
<comment type="function">
    <text>Used by the larvae to construct a supramolecular structure, the larval tube.</text>
</comment>
<comment type="subcellular location">
    <subcellularLocation>
        <location>Secreted</location>
    </subcellularLocation>
</comment>
<comment type="tissue specificity">
    <text>Salivary gland.</text>
</comment>
<accession>P08726</accession>
<name>BAR6_CHITE</name>
<organism>
    <name type="scientific">Chironomus tentans</name>
    <name type="common">Midge</name>
    <name type="synonym">Camptochironomus tentans</name>
    <dbReference type="NCBI Taxonomy" id="7153"/>
    <lineage>
        <taxon>Eukaryota</taxon>
        <taxon>Metazoa</taxon>
        <taxon>Ecdysozoa</taxon>
        <taxon>Arthropoda</taxon>
        <taxon>Hexapoda</taxon>
        <taxon>Insecta</taxon>
        <taxon>Pterygota</taxon>
        <taxon>Neoptera</taxon>
        <taxon>Endopterygota</taxon>
        <taxon>Diptera</taxon>
        <taxon>Nematocera</taxon>
        <taxon>Chironomoidea</taxon>
        <taxon>Chironomidae</taxon>
        <taxon>Chironominae</taxon>
        <taxon>Chironomus</taxon>
    </lineage>
</organism>
<proteinExistence type="evidence at transcript level"/>
<evidence type="ECO:0000256" key="1">
    <source>
        <dbReference type="SAM" id="MobiDB-lite"/>
    </source>
</evidence>
<protein>
    <recommendedName>
        <fullName>Balbiani ring protein 6</fullName>
    </recommendedName>
    <alternativeName>
        <fullName>Giant secretory protein I-C</fullName>
        <shortName>GSP-IC</shortName>
    </alternativeName>
</protein>
<feature type="chain" id="PRO_0000064826" description="Balbiani ring protein 6">
    <location>
        <begin position="1" status="less than"/>
        <end position="235" status="greater than"/>
    </location>
</feature>
<feature type="region of interest" description="Disordered" evidence="1">
    <location>
        <begin position="1"/>
        <end position="133"/>
    </location>
</feature>
<feature type="region of interest" description="Disordered" evidence="1">
    <location>
        <begin position="155"/>
        <end position="201"/>
    </location>
</feature>
<feature type="compositionally biased region" description="Basic and acidic residues" evidence="1">
    <location>
        <begin position="16"/>
        <end position="85"/>
    </location>
</feature>
<feature type="compositionally biased region" description="Basic and acidic residues" evidence="1">
    <location>
        <begin position="95"/>
        <end position="133"/>
    </location>
</feature>
<feature type="compositionally biased region" description="Basic and acidic residues" evidence="1">
    <location>
        <begin position="168"/>
        <end position="201"/>
    </location>
</feature>
<feature type="non-terminal residue">
    <location>
        <position position="1"/>
    </location>
</feature>
<feature type="non-terminal residue">
    <location>
        <position position="235"/>
    </location>
</feature>